<gene>
    <name type="primary">M</name>
</gene>
<keyword id="KW-1043">Host membrane</keyword>
<keyword id="KW-0945">Host-virus interaction</keyword>
<keyword id="KW-0472">Membrane</keyword>
<keyword id="KW-0597">Phosphoprotein</keyword>
<keyword id="KW-1198">Viral budding</keyword>
<keyword id="KW-1187">Viral budding via the host ESCRT complexes</keyword>
<keyword id="KW-0261">Viral envelope protein</keyword>
<keyword id="KW-0468">Viral matrix protein</keyword>
<keyword id="KW-1188">Viral release from host cell</keyword>
<keyword id="KW-0946">Virion</keyword>
<name>MATRX_IRKV</name>
<sequence length="202" mass="23041">MNIIRKIVKSCKDEEEHKPNPVSAPPDDDDLWLPPPEYVPLAEITGKKNMRNFCINGEVKVCSPNGYSFRILRHILKSFEGVYSGNRRMIGLVKVVIGLAQSGAPVPEGMNWVYKIRRTLVFQWAESSGPLDGEELEYSQEITWDDDSEFVGLQIRVSARQCHIQGRLWCINMNSRACQLWADMSLKTQQSNEDKNTSLLLE</sequence>
<accession>Q5VKP4</accession>
<feature type="chain" id="PRO_0000295570" description="Matrix protein">
    <location>
        <begin position="1"/>
        <end position="202"/>
    </location>
</feature>
<feature type="region of interest" description="Essential for glycoprotein binding" evidence="1">
    <location>
        <begin position="115"/>
        <end position="151"/>
    </location>
</feature>
<feature type="short sequence motif" description="PPXY motif" evidence="2">
    <location>
        <begin position="35"/>
        <end position="38"/>
    </location>
</feature>
<evidence type="ECO:0000250" key="1"/>
<evidence type="ECO:0000255" key="2"/>
<evidence type="ECO:0000305" key="3"/>
<organism>
    <name type="scientific">Irkut virus</name>
    <name type="common">IRKV</name>
    <dbReference type="NCBI Taxonomy" id="249583"/>
    <lineage>
        <taxon>Viruses</taxon>
        <taxon>Riboviria</taxon>
        <taxon>Orthornavirae</taxon>
        <taxon>Negarnaviricota</taxon>
        <taxon>Haploviricotina</taxon>
        <taxon>Monjiviricetes</taxon>
        <taxon>Mononegavirales</taxon>
        <taxon>Rhabdoviridae</taxon>
        <taxon>Alpharhabdovirinae</taxon>
        <taxon>Lyssavirus</taxon>
    </lineage>
</organism>
<comment type="function">
    <text evidence="1">Plays a major role in assembly and budding of virion. Completely covers the ribonucleoprotein coil and keep it in condensed bullet-shaped form. Inhibits viral transcription and stimulates replication. Plays a major role in early induction of TRAIL-mediated apoptosis in infected neurons (By similarity).</text>
</comment>
<comment type="subunit">
    <text evidence="1">Homomultimer. Interacts with nucleoprotein and with the cytoplasmic domain of glycoprotein (By similarity).</text>
</comment>
<comment type="subcellular location">
    <subcellularLocation>
        <location>Virion membrane</location>
        <topology>Peripheral membrane protein</topology>
    </subcellularLocation>
    <subcellularLocation>
        <location evidence="1">Host endomembrane system</location>
        <topology evidence="1">Peripheral membrane protein</topology>
    </subcellularLocation>
</comment>
<comment type="domain">
    <text evidence="3">Late-budding domains (L domains) are short sequence motifs essential for viral particle budding. They recruit proteins of the host ESCRT machinery (Endosomal Sorting Complex Required for Transport) or ESCRT-associated proteins. Matrix protein contains one L domain: a PPXY motif which potentially interacts with the WW domain 3 of NEDD4 E3 ubiquitin ligase (Potential).</text>
</comment>
<comment type="miscellaneous">
    <text evidence="1">Most abundant protein in the virion.</text>
</comment>
<comment type="similarity">
    <text evidence="3">Belongs to the lyssavirus matrix protein family.</text>
</comment>
<organismHost>
    <name type="scientific">Murina leucogaster</name>
    <name type="common">Greater tube-nosed bat</name>
    <dbReference type="NCBI Taxonomy" id="187017"/>
</organismHost>
<proteinExistence type="evidence at transcript level"/>
<protein>
    <recommendedName>
        <fullName>Matrix protein</fullName>
    </recommendedName>
    <alternativeName>
        <fullName>Phosphoprotein M2</fullName>
    </alternativeName>
</protein>
<reference key="1">
    <citation type="journal article" date="2005" name="Virus Res.">
        <title>Phylogenetic relationships of Irkut and West Caucasian bat viruses within the Lyssavirus genus and suggested quantitative criteria based on the N gene sequence for lyssavirus genotype definition.</title>
        <authorList>
            <person name="Kuzmin I.V."/>
            <person name="Hughes G.J."/>
            <person name="Botvinkin A.D."/>
            <person name="Orciari L.A."/>
            <person name="Rupprecht C.E."/>
        </authorList>
    </citation>
    <scope>NUCLEOTIDE SEQUENCE [GENOMIC RNA]</scope>
</reference>
<reference key="2">
    <citation type="journal article" date="2008" name="Virus Res.">
        <title>Complete genomes of Aravan, Khujand, Irkut and West Caucasian bat viruses, with special attention to the polymerase gene and non-coding regions.</title>
        <authorList>
            <person name="Kuzmin I.V."/>
            <person name="Wu X."/>
            <person name="Tordo N."/>
            <person name="Rupprecht C.E."/>
        </authorList>
    </citation>
    <scope>NUCLEOTIDE SEQUENCE [GENOMIC RNA]</scope>
</reference>
<dbReference type="EMBL" id="EF614260">
    <property type="protein sequence ID" value="AAR03479.1"/>
    <property type="molecule type" value="mRNA"/>
</dbReference>
<dbReference type="RefSeq" id="YP_007641399.1">
    <property type="nucleotide sequence ID" value="NC_020809.1"/>
</dbReference>
<dbReference type="SMR" id="Q5VKP4"/>
<dbReference type="GeneID" id="14857933"/>
<dbReference type="KEGG" id="vg:14857933"/>
<dbReference type="OrthoDB" id="9130at10239"/>
<dbReference type="Proteomes" id="UP000008381">
    <property type="component" value="Segment"/>
</dbReference>
<dbReference type="GO" id="GO:0033645">
    <property type="term" value="C:host cell endomembrane system"/>
    <property type="evidence" value="ECO:0007669"/>
    <property type="project" value="UniProtKB-SubCell"/>
</dbReference>
<dbReference type="GO" id="GO:0016020">
    <property type="term" value="C:membrane"/>
    <property type="evidence" value="ECO:0007669"/>
    <property type="project" value="UniProtKB-KW"/>
</dbReference>
<dbReference type="GO" id="GO:0019031">
    <property type="term" value="C:viral envelope"/>
    <property type="evidence" value="ECO:0007669"/>
    <property type="project" value="UniProtKB-KW"/>
</dbReference>
<dbReference type="GO" id="GO:0055036">
    <property type="term" value="C:virion membrane"/>
    <property type="evidence" value="ECO:0007669"/>
    <property type="project" value="UniProtKB-SubCell"/>
</dbReference>
<dbReference type="GO" id="GO:0039660">
    <property type="term" value="F:structural constituent of virion"/>
    <property type="evidence" value="ECO:0007669"/>
    <property type="project" value="UniProtKB-KW"/>
</dbReference>
<dbReference type="GO" id="GO:0039702">
    <property type="term" value="P:viral budding via host ESCRT complex"/>
    <property type="evidence" value="ECO:0007669"/>
    <property type="project" value="UniProtKB-KW"/>
</dbReference>
<dbReference type="Gene3D" id="3.10.460.20">
    <property type="entry name" value="Rhabdovirus matrix protein M2"/>
    <property type="match status" value="1"/>
</dbReference>
<dbReference type="InterPro" id="IPR006870">
    <property type="entry name" value="Rhabdo_M"/>
</dbReference>
<dbReference type="InterPro" id="IPR038617">
    <property type="entry name" value="Rhabdovirus_M_sf"/>
</dbReference>
<dbReference type="Pfam" id="PF04785">
    <property type="entry name" value="Rhabdo_M2"/>
    <property type="match status" value="1"/>
</dbReference>